<evidence type="ECO:0000255" key="1">
    <source>
        <dbReference type="HAMAP-Rule" id="MF_00362"/>
    </source>
</evidence>
<evidence type="ECO:0000305" key="2"/>
<name>RL10_MYCSJ</name>
<gene>
    <name evidence="1" type="primary">rplJ</name>
    <name type="ordered locus">Mjls_0994</name>
</gene>
<reference key="1">
    <citation type="submission" date="2007-02" db="EMBL/GenBank/DDBJ databases">
        <title>Complete sequence of Mycobacterium sp. JLS.</title>
        <authorList>
            <consortium name="US DOE Joint Genome Institute"/>
            <person name="Copeland A."/>
            <person name="Lucas S."/>
            <person name="Lapidus A."/>
            <person name="Barry K."/>
            <person name="Detter J.C."/>
            <person name="Glavina del Rio T."/>
            <person name="Hammon N."/>
            <person name="Israni S."/>
            <person name="Dalin E."/>
            <person name="Tice H."/>
            <person name="Pitluck S."/>
            <person name="Chain P."/>
            <person name="Malfatti S."/>
            <person name="Shin M."/>
            <person name="Vergez L."/>
            <person name="Schmutz J."/>
            <person name="Larimer F."/>
            <person name="Land M."/>
            <person name="Hauser L."/>
            <person name="Kyrpides N."/>
            <person name="Mikhailova N."/>
            <person name="Miller C.D."/>
            <person name="Anderson A.J."/>
            <person name="Sims R.C."/>
            <person name="Richardson P."/>
        </authorList>
    </citation>
    <scope>NUCLEOTIDE SEQUENCE [LARGE SCALE GENOMIC DNA]</scope>
    <source>
        <strain>JLS</strain>
    </source>
</reference>
<dbReference type="EMBL" id="CP000580">
    <property type="protein sequence ID" value="ABN96802.1"/>
    <property type="molecule type" value="Genomic_DNA"/>
</dbReference>
<dbReference type="SMR" id="A3PV75"/>
<dbReference type="KEGG" id="mjl:Mjls_0994"/>
<dbReference type="HOGENOM" id="CLU_092227_1_0_11"/>
<dbReference type="BioCyc" id="MSP164757:G1G8C-1006-MONOMER"/>
<dbReference type="GO" id="GO:0015934">
    <property type="term" value="C:large ribosomal subunit"/>
    <property type="evidence" value="ECO:0007669"/>
    <property type="project" value="InterPro"/>
</dbReference>
<dbReference type="GO" id="GO:0070180">
    <property type="term" value="F:large ribosomal subunit rRNA binding"/>
    <property type="evidence" value="ECO:0007669"/>
    <property type="project" value="UniProtKB-UniRule"/>
</dbReference>
<dbReference type="GO" id="GO:0003735">
    <property type="term" value="F:structural constituent of ribosome"/>
    <property type="evidence" value="ECO:0007669"/>
    <property type="project" value="InterPro"/>
</dbReference>
<dbReference type="GO" id="GO:0006412">
    <property type="term" value="P:translation"/>
    <property type="evidence" value="ECO:0007669"/>
    <property type="project" value="UniProtKB-UniRule"/>
</dbReference>
<dbReference type="CDD" id="cd05797">
    <property type="entry name" value="Ribosomal_L10"/>
    <property type="match status" value="1"/>
</dbReference>
<dbReference type="FunFam" id="3.30.70.1730:FF:000003">
    <property type="entry name" value="50S ribosomal protein L10"/>
    <property type="match status" value="1"/>
</dbReference>
<dbReference type="Gene3D" id="3.30.70.1730">
    <property type="match status" value="1"/>
</dbReference>
<dbReference type="Gene3D" id="6.10.250.290">
    <property type="match status" value="1"/>
</dbReference>
<dbReference type="HAMAP" id="MF_00362">
    <property type="entry name" value="Ribosomal_uL10"/>
    <property type="match status" value="1"/>
</dbReference>
<dbReference type="InterPro" id="IPR001790">
    <property type="entry name" value="Ribosomal_uL10"/>
</dbReference>
<dbReference type="InterPro" id="IPR043141">
    <property type="entry name" value="Ribosomal_uL10-like_sf"/>
</dbReference>
<dbReference type="InterPro" id="IPR022973">
    <property type="entry name" value="Ribosomal_uL10_bac"/>
</dbReference>
<dbReference type="InterPro" id="IPR047865">
    <property type="entry name" value="Ribosomal_uL10_bac_type"/>
</dbReference>
<dbReference type="InterPro" id="IPR002363">
    <property type="entry name" value="Ribosomal_uL10_CS_bac"/>
</dbReference>
<dbReference type="NCBIfam" id="NF000955">
    <property type="entry name" value="PRK00099.1-1"/>
    <property type="match status" value="1"/>
</dbReference>
<dbReference type="PANTHER" id="PTHR11560">
    <property type="entry name" value="39S RIBOSOMAL PROTEIN L10, MITOCHONDRIAL"/>
    <property type="match status" value="1"/>
</dbReference>
<dbReference type="Pfam" id="PF00466">
    <property type="entry name" value="Ribosomal_L10"/>
    <property type="match status" value="1"/>
</dbReference>
<dbReference type="SUPFAM" id="SSF160369">
    <property type="entry name" value="Ribosomal protein L10-like"/>
    <property type="match status" value="1"/>
</dbReference>
<dbReference type="PROSITE" id="PS01109">
    <property type="entry name" value="RIBOSOMAL_L10"/>
    <property type="match status" value="1"/>
</dbReference>
<organism>
    <name type="scientific">Mycobacterium sp. (strain JLS)</name>
    <dbReference type="NCBI Taxonomy" id="164757"/>
    <lineage>
        <taxon>Bacteria</taxon>
        <taxon>Bacillati</taxon>
        <taxon>Actinomycetota</taxon>
        <taxon>Actinomycetes</taxon>
        <taxon>Mycobacteriales</taxon>
        <taxon>Mycobacteriaceae</taxon>
        <taxon>Mycobacterium</taxon>
    </lineage>
</organism>
<protein>
    <recommendedName>
        <fullName evidence="1">Large ribosomal subunit protein uL10</fullName>
    </recommendedName>
    <alternativeName>
        <fullName evidence="2">50S ribosomal protein L10</fullName>
    </alternativeName>
</protein>
<keyword id="KW-0687">Ribonucleoprotein</keyword>
<keyword id="KW-0689">Ribosomal protein</keyword>
<keyword id="KW-0694">RNA-binding</keyword>
<keyword id="KW-0699">rRNA-binding</keyword>
<sequence>MAKADKATAVADIAEQFKEATATVVTEYRGLTVANLAQLRRSLGESATYTVAKNTLVKRAAAEAGIDGLDELFTGPTAIAFVQGEPVDAAKAIKAFAKEHKALVIKGGYMEGRALSIDEVNRIADLESREVLLAKLAGAMKGNLAKAAGLFNAPASQVARLAAALQEKKAAEEAA</sequence>
<proteinExistence type="inferred from homology"/>
<comment type="function">
    <text evidence="1">Forms part of the ribosomal stalk, playing a central role in the interaction of the ribosome with GTP-bound translation factors.</text>
</comment>
<comment type="subunit">
    <text evidence="1">Part of the ribosomal stalk of the 50S ribosomal subunit. The N-terminus interacts with L11 and the large rRNA to form the base of the stalk. The C-terminus forms an elongated spine to which L12 dimers bind in a sequential fashion forming a multimeric L10(L12)X complex.</text>
</comment>
<comment type="similarity">
    <text evidence="1">Belongs to the universal ribosomal protein uL10 family.</text>
</comment>
<feature type="chain" id="PRO_1000005537" description="Large ribosomal subunit protein uL10">
    <location>
        <begin position="1"/>
        <end position="175"/>
    </location>
</feature>
<accession>A3PV75</accession>